<keyword id="KW-0143">Chaperone</keyword>
<keyword id="KW-0963">Cytoplasm</keyword>
<keyword id="KW-1185">Reference proteome</keyword>
<keyword id="KW-0690">Ribosome biogenesis</keyword>
<keyword id="KW-0698">rRNA processing</keyword>
<dbReference type="EMBL" id="AE007869">
    <property type="protein sequence ID" value="AAK88420.2"/>
    <property type="status" value="ALT_INIT"/>
    <property type="molecule type" value="Genomic_DNA"/>
</dbReference>
<dbReference type="PIR" id="AC2908">
    <property type="entry name" value="AC2908"/>
</dbReference>
<dbReference type="PIR" id="C97683">
    <property type="entry name" value="C97683"/>
</dbReference>
<dbReference type="RefSeq" id="NP_355635.2">
    <property type="nucleotide sequence ID" value="NC_003062.2"/>
</dbReference>
<dbReference type="RefSeq" id="WP_006310877.1">
    <property type="nucleotide sequence ID" value="NC_003062.2"/>
</dbReference>
<dbReference type="SMR" id="Q8UBZ8"/>
<dbReference type="STRING" id="176299.Atu2700"/>
<dbReference type="EnsemblBacteria" id="AAK88420">
    <property type="protein sequence ID" value="AAK88420"/>
    <property type="gene ID" value="Atu2700"/>
</dbReference>
<dbReference type="GeneID" id="1134738"/>
<dbReference type="KEGG" id="atu:Atu2700"/>
<dbReference type="PATRIC" id="fig|176299.10.peg.2710"/>
<dbReference type="eggNOG" id="COG0806">
    <property type="taxonomic scope" value="Bacteria"/>
</dbReference>
<dbReference type="HOGENOM" id="CLU_077636_0_1_5"/>
<dbReference type="OrthoDB" id="9788191at2"/>
<dbReference type="Proteomes" id="UP000000813">
    <property type="component" value="Chromosome circular"/>
</dbReference>
<dbReference type="GO" id="GO:0005737">
    <property type="term" value="C:cytoplasm"/>
    <property type="evidence" value="ECO:0007669"/>
    <property type="project" value="UniProtKB-SubCell"/>
</dbReference>
<dbReference type="GO" id="GO:0005840">
    <property type="term" value="C:ribosome"/>
    <property type="evidence" value="ECO:0007669"/>
    <property type="project" value="InterPro"/>
</dbReference>
<dbReference type="GO" id="GO:0043022">
    <property type="term" value="F:ribosome binding"/>
    <property type="evidence" value="ECO:0007669"/>
    <property type="project" value="InterPro"/>
</dbReference>
<dbReference type="GO" id="GO:0042274">
    <property type="term" value="P:ribosomal small subunit biogenesis"/>
    <property type="evidence" value="ECO:0007669"/>
    <property type="project" value="UniProtKB-UniRule"/>
</dbReference>
<dbReference type="GO" id="GO:0006364">
    <property type="term" value="P:rRNA processing"/>
    <property type="evidence" value="ECO:0007669"/>
    <property type="project" value="UniProtKB-UniRule"/>
</dbReference>
<dbReference type="Gene3D" id="2.30.30.240">
    <property type="entry name" value="PRC-barrel domain"/>
    <property type="match status" value="1"/>
</dbReference>
<dbReference type="Gene3D" id="2.40.30.60">
    <property type="entry name" value="RimM"/>
    <property type="match status" value="1"/>
</dbReference>
<dbReference type="HAMAP" id="MF_00014">
    <property type="entry name" value="Ribosome_mat_RimM"/>
    <property type="match status" value="1"/>
</dbReference>
<dbReference type="InterPro" id="IPR027275">
    <property type="entry name" value="PRC-brl_dom"/>
</dbReference>
<dbReference type="InterPro" id="IPR011033">
    <property type="entry name" value="PRC_barrel-like_sf"/>
</dbReference>
<dbReference type="InterPro" id="IPR011961">
    <property type="entry name" value="RimM"/>
</dbReference>
<dbReference type="InterPro" id="IPR002676">
    <property type="entry name" value="RimM_N"/>
</dbReference>
<dbReference type="InterPro" id="IPR036976">
    <property type="entry name" value="RimM_N_sf"/>
</dbReference>
<dbReference type="InterPro" id="IPR009000">
    <property type="entry name" value="Transl_B-barrel_sf"/>
</dbReference>
<dbReference type="NCBIfam" id="TIGR02273">
    <property type="entry name" value="16S_RimM"/>
    <property type="match status" value="1"/>
</dbReference>
<dbReference type="PANTHER" id="PTHR33692">
    <property type="entry name" value="RIBOSOME MATURATION FACTOR RIMM"/>
    <property type="match status" value="1"/>
</dbReference>
<dbReference type="PANTHER" id="PTHR33692:SF1">
    <property type="entry name" value="RIBOSOME MATURATION FACTOR RIMM"/>
    <property type="match status" value="1"/>
</dbReference>
<dbReference type="Pfam" id="PF05239">
    <property type="entry name" value="PRC"/>
    <property type="match status" value="1"/>
</dbReference>
<dbReference type="Pfam" id="PF01782">
    <property type="entry name" value="RimM"/>
    <property type="match status" value="1"/>
</dbReference>
<dbReference type="SUPFAM" id="SSF50346">
    <property type="entry name" value="PRC-barrel domain"/>
    <property type="match status" value="1"/>
</dbReference>
<dbReference type="SUPFAM" id="SSF50447">
    <property type="entry name" value="Translation proteins"/>
    <property type="match status" value="1"/>
</dbReference>
<organism>
    <name type="scientific">Agrobacterium fabrum (strain C58 / ATCC 33970)</name>
    <name type="common">Agrobacterium tumefaciens (strain C58)</name>
    <dbReference type="NCBI Taxonomy" id="176299"/>
    <lineage>
        <taxon>Bacteria</taxon>
        <taxon>Pseudomonadati</taxon>
        <taxon>Pseudomonadota</taxon>
        <taxon>Alphaproteobacteria</taxon>
        <taxon>Hyphomicrobiales</taxon>
        <taxon>Rhizobiaceae</taxon>
        <taxon>Rhizobium/Agrobacterium group</taxon>
        <taxon>Agrobacterium</taxon>
        <taxon>Agrobacterium tumefaciens complex</taxon>
    </lineage>
</organism>
<protein>
    <recommendedName>
        <fullName evidence="1">Ribosome maturation factor RimM</fullName>
    </recommendedName>
</protein>
<proteinExistence type="inferred from homology"/>
<evidence type="ECO:0000255" key="1">
    <source>
        <dbReference type="HAMAP-Rule" id="MF_00014"/>
    </source>
</evidence>
<evidence type="ECO:0000305" key="2"/>
<comment type="function">
    <text evidence="1">An accessory protein needed during the final step in the assembly of 30S ribosomal subunit, possibly for assembly of the head region. Essential for efficient processing of 16S rRNA. May be needed both before and after RbfA during the maturation of 16S rRNA. It has affinity for free ribosomal 30S subunits but not for 70S ribosomes.</text>
</comment>
<comment type="subunit">
    <text evidence="1">Binds ribosomal protein uS19.</text>
</comment>
<comment type="subcellular location">
    <subcellularLocation>
        <location evidence="1">Cytoplasm</location>
    </subcellularLocation>
</comment>
<comment type="domain">
    <text evidence="1">The PRC barrel domain binds ribosomal protein uS19.</text>
</comment>
<comment type="similarity">
    <text evidence="1">Belongs to the RimM family.</text>
</comment>
<comment type="sequence caution" evidence="2">
    <conflict type="erroneous initiation">
        <sequence resource="EMBL-CDS" id="AAK88420"/>
    </conflict>
</comment>
<sequence>MAKLENPILMAKIGGAQGLRGEVRVSTYTDDPMALGDYGNLVTADGRVFEILEVREGKNVVVVRFRGINDRNAAESLNGLELFIERDNLPDDELDDDEFYYADLEGLEAVDAEGKSYGAVSAVYDFGAGDLLELKGAGRRPALIPFSEAAVLEIDLEAGRILIDPMAAGLIDNPDDKDQNGMSPFGKK</sequence>
<reference key="1">
    <citation type="journal article" date="2001" name="Science">
        <title>The genome of the natural genetic engineer Agrobacterium tumefaciens C58.</title>
        <authorList>
            <person name="Wood D.W."/>
            <person name="Setubal J.C."/>
            <person name="Kaul R."/>
            <person name="Monks D.E."/>
            <person name="Kitajima J.P."/>
            <person name="Okura V.K."/>
            <person name="Zhou Y."/>
            <person name="Chen L."/>
            <person name="Wood G.E."/>
            <person name="Almeida N.F. Jr."/>
            <person name="Woo L."/>
            <person name="Chen Y."/>
            <person name="Paulsen I.T."/>
            <person name="Eisen J.A."/>
            <person name="Karp P.D."/>
            <person name="Bovee D. Sr."/>
            <person name="Chapman P."/>
            <person name="Clendenning J."/>
            <person name="Deatherage G."/>
            <person name="Gillet W."/>
            <person name="Grant C."/>
            <person name="Kutyavin T."/>
            <person name="Levy R."/>
            <person name="Li M.-J."/>
            <person name="McClelland E."/>
            <person name="Palmieri A."/>
            <person name="Raymond C."/>
            <person name="Rouse G."/>
            <person name="Saenphimmachak C."/>
            <person name="Wu Z."/>
            <person name="Romero P."/>
            <person name="Gordon D."/>
            <person name="Zhang S."/>
            <person name="Yoo H."/>
            <person name="Tao Y."/>
            <person name="Biddle P."/>
            <person name="Jung M."/>
            <person name="Krespan W."/>
            <person name="Perry M."/>
            <person name="Gordon-Kamm B."/>
            <person name="Liao L."/>
            <person name="Kim S."/>
            <person name="Hendrick C."/>
            <person name="Zhao Z.-Y."/>
            <person name="Dolan M."/>
            <person name="Chumley F."/>
            <person name="Tingey S.V."/>
            <person name="Tomb J.-F."/>
            <person name="Gordon M.P."/>
            <person name="Olson M.V."/>
            <person name="Nester E.W."/>
        </authorList>
    </citation>
    <scope>NUCLEOTIDE SEQUENCE [LARGE SCALE GENOMIC DNA]</scope>
    <source>
        <strain>C58 / ATCC 33970</strain>
    </source>
</reference>
<reference key="2">
    <citation type="journal article" date="2001" name="Science">
        <title>Genome sequence of the plant pathogen and biotechnology agent Agrobacterium tumefaciens C58.</title>
        <authorList>
            <person name="Goodner B."/>
            <person name="Hinkle G."/>
            <person name="Gattung S."/>
            <person name="Miller N."/>
            <person name="Blanchard M."/>
            <person name="Qurollo B."/>
            <person name="Goldman B.S."/>
            <person name="Cao Y."/>
            <person name="Askenazi M."/>
            <person name="Halling C."/>
            <person name="Mullin L."/>
            <person name="Houmiel K."/>
            <person name="Gordon J."/>
            <person name="Vaudin M."/>
            <person name="Iartchouk O."/>
            <person name="Epp A."/>
            <person name="Liu F."/>
            <person name="Wollam C."/>
            <person name="Allinger M."/>
            <person name="Doughty D."/>
            <person name="Scott C."/>
            <person name="Lappas C."/>
            <person name="Markelz B."/>
            <person name="Flanagan C."/>
            <person name="Crowell C."/>
            <person name="Gurson J."/>
            <person name="Lomo C."/>
            <person name="Sear C."/>
            <person name="Strub G."/>
            <person name="Cielo C."/>
            <person name="Slater S."/>
        </authorList>
    </citation>
    <scope>NUCLEOTIDE SEQUENCE [LARGE SCALE GENOMIC DNA]</scope>
    <source>
        <strain>C58 / ATCC 33970</strain>
    </source>
</reference>
<accession>Q8UBZ8</accession>
<name>RIMM_AGRFC</name>
<gene>
    <name evidence="1" type="primary">rimM</name>
    <name type="ordered locus">Atu2700</name>
    <name type="ORF">AGR_C_4896</name>
</gene>
<feature type="chain" id="PRO_0000163240" description="Ribosome maturation factor RimM">
    <location>
        <begin position="1"/>
        <end position="188"/>
    </location>
</feature>
<feature type="domain" description="PRC barrel" evidence="1">
    <location>
        <begin position="96"/>
        <end position="169"/>
    </location>
</feature>